<dbReference type="EC" id="3.1.1.11"/>
<dbReference type="EMBL" id="AAHF01000013">
    <property type="protein sequence ID" value="EAL85449.1"/>
    <property type="molecule type" value="Genomic_DNA"/>
</dbReference>
<dbReference type="RefSeq" id="XP_747487.1">
    <property type="nucleotide sequence ID" value="XM_742394.1"/>
</dbReference>
<dbReference type="SMR" id="Q4WBT5"/>
<dbReference type="STRING" id="330879.Q4WBT5"/>
<dbReference type="GlyCosmos" id="Q4WBT5">
    <property type="glycosylation" value="1 site, No reported glycans"/>
</dbReference>
<dbReference type="EnsemblFungi" id="EAL85449">
    <property type="protein sequence ID" value="EAL85449"/>
    <property type="gene ID" value="AFUA_8G06880"/>
</dbReference>
<dbReference type="GeneID" id="3504761"/>
<dbReference type="KEGG" id="afm:AFUA_8G06880"/>
<dbReference type="VEuPathDB" id="FungiDB:Afu8g06880"/>
<dbReference type="eggNOG" id="ENOG502QSQ4">
    <property type="taxonomic scope" value="Eukaryota"/>
</dbReference>
<dbReference type="HOGENOM" id="CLU_012243_1_2_1"/>
<dbReference type="InParanoid" id="Q4WBT5"/>
<dbReference type="OMA" id="CQFSGYQ"/>
<dbReference type="OrthoDB" id="2019149at2759"/>
<dbReference type="UniPathway" id="UPA00545">
    <property type="reaction ID" value="UER00823"/>
</dbReference>
<dbReference type="Proteomes" id="UP000002530">
    <property type="component" value="Chromosome 8"/>
</dbReference>
<dbReference type="GO" id="GO:0005576">
    <property type="term" value="C:extracellular region"/>
    <property type="evidence" value="ECO:0007669"/>
    <property type="project" value="UniProtKB-SubCell"/>
</dbReference>
<dbReference type="GO" id="GO:0030599">
    <property type="term" value="F:pectinesterase activity"/>
    <property type="evidence" value="ECO:0000318"/>
    <property type="project" value="GO_Central"/>
</dbReference>
<dbReference type="GO" id="GO:0042545">
    <property type="term" value="P:cell wall modification"/>
    <property type="evidence" value="ECO:0007669"/>
    <property type="project" value="InterPro"/>
</dbReference>
<dbReference type="GO" id="GO:0045490">
    <property type="term" value="P:pectin catabolic process"/>
    <property type="evidence" value="ECO:0000318"/>
    <property type="project" value="GO_Central"/>
</dbReference>
<dbReference type="FunFam" id="2.160.20.10:FF:000014">
    <property type="entry name" value="Pectinesterase"/>
    <property type="match status" value="1"/>
</dbReference>
<dbReference type="Gene3D" id="2.160.20.10">
    <property type="entry name" value="Single-stranded right-handed beta-helix, Pectin lyase-like"/>
    <property type="match status" value="1"/>
</dbReference>
<dbReference type="InterPro" id="IPR012334">
    <property type="entry name" value="Pectin_lyas_fold"/>
</dbReference>
<dbReference type="InterPro" id="IPR011050">
    <property type="entry name" value="Pectin_lyase_fold/virulence"/>
</dbReference>
<dbReference type="InterPro" id="IPR033131">
    <property type="entry name" value="Pectinesterase_Asp_AS"/>
</dbReference>
<dbReference type="InterPro" id="IPR000070">
    <property type="entry name" value="Pectinesterase_cat"/>
</dbReference>
<dbReference type="PANTHER" id="PTHR31321">
    <property type="entry name" value="ACYL-COA THIOESTER HYDROLASE YBHC-RELATED"/>
    <property type="match status" value="1"/>
</dbReference>
<dbReference type="PANTHER" id="PTHR31321:SF57">
    <property type="entry name" value="PECTINESTERASE 53-RELATED"/>
    <property type="match status" value="1"/>
</dbReference>
<dbReference type="Pfam" id="PF01095">
    <property type="entry name" value="Pectinesterase"/>
    <property type="match status" value="1"/>
</dbReference>
<dbReference type="SUPFAM" id="SSF51126">
    <property type="entry name" value="Pectin lyase-like"/>
    <property type="match status" value="1"/>
</dbReference>
<dbReference type="PROSITE" id="PS00503">
    <property type="entry name" value="PECTINESTERASE_2"/>
    <property type="match status" value="1"/>
</dbReference>
<keyword id="KW-0063">Aspartyl esterase</keyword>
<keyword id="KW-0961">Cell wall biogenesis/degradation</keyword>
<keyword id="KW-0325">Glycoprotein</keyword>
<keyword id="KW-0378">Hydrolase</keyword>
<keyword id="KW-1185">Reference proteome</keyword>
<keyword id="KW-0964">Secreted</keyword>
<keyword id="KW-0732">Signal</keyword>
<feature type="signal peptide" evidence="2">
    <location>
        <begin position="1"/>
        <end position="19"/>
    </location>
</feature>
<feature type="chain" id="PRO_0000394081" description="Probable pectinesterase A">
    <location>
        <begin position="20"/>
        <end position="324"/>
    </location>
</feature>
<feature type="active site" description="Proton donor" evidence="3">
    <location>
        <position position="165"/>
    </location>
</feature>
<feature type="active site" description="Nucleophile" evidence="3">
    <location>
        <position position="186"/>
    </location>
</feature>
<feature type="binding site" evidence="1">
    <location>
        <position position="142"/>
    </location>
    <ligand>
        <name>substrate</name>
    </ligand>
</feature>
<feature type="binding site" evidence="1">
    <location>
        <position position="246"/>
    </location>
    <ligand>
        <name>substrate</name>
    </ligand>
</feature>
<feature type="binding site" evidence="1">
    <location>
        <position position="248"/>
    </location>
    <ligand>
        <name>substrate</name>
    </ligand>
</feature>
<feature type="site" description="Transition state stabilizer" evidence="1">
    <location>
        <position position="164"/>
    </location>
</feature>
<feature type="glycosylation site" description="N-linked (GlcNAc...) asparagine" evidence="2">
    <location>
        <position position="27"/>
    </location>
</feature>
<proteinExistence type="inferred from homology"/>
<sequence length="324" mass="34558">MYLPSLVLGLLGFGLTASTSPIEERSNRSKAPAGCLTVGSSGTYATIGAALSALGSSTSDACIFIGAGTYQEQITIDYKGKLTMYGETTDTSSYKQNLVTITHSISSPEAGSLDKSATVNVRSDGFKMYNINVINGYGKGAQAVTLVANADKLGFYGCSFVGYQDTLYAKAGRQYYSNCYIEGAVDYIFGDASAWFGECDLVSVGPGYITAMSRTTADETTWYAIDHCNIYGKPGVDLTSAVYLGRPWRVLARVIFQNSQLSNIINPKGWSPMATGATPLYYEYNNKGAGADTSKREYESPISGAVSIATVLGGGWNSWVDTTY</sequence>
<protein>
    <recommendedName>
        <fullName>Probable pectinesterase A</fullName>
        <ecNumber>3.1.1.11</ecNumber>
    </recommendedName>
    <alternativeName>
        <fullName>Pectin methylesterase A</fullName>
    </alternativeName>
</protein>
<organism>
    <name type="scientific">Aspergillus fumigatus (strain ATCC MYA-4609 / CBS 101355 / FGSC A1100 / Af293)</name>
    <name type="common">Neosartorya fumigata</name>
    <dbReference type="NCBI Taxonomy" id="330879"/>
    <lineage>
        <taxon>Eukaryota</taxon>
        <taxon>Fungi</taxon>
        <taxon>Dikarya</taxon>
        <taxon>Ascomycota</taxon>
        <taxon>Pezizomycotina</taxon>
        <taxon>Eurotiomycetes</taxon>
        <taxon>Eurotiomycetidae</taxon>
        <taxon>Eurotiales</taxon>
        <taxon>Aspergillaceae</taxon>
        <taxon>Aspergillus</taxon>
        <taxon>Aspergillus subgen. Fumigati</taxon>
    </lineage>
</organism>
<comment type="function">
    <text evidence="1">Involved in maceration and soft-rotting of plant tissue.</text>
</comment>
<comment type="catalytic activity">
    <reaction>
        <text>[(1-&gt;4)-alpha-D-galacturonosyl methyl ester](n) + n H2O = [(1-&gt;4)-alpha-D-galacturonosyl](n) + n methanol + n H(+)</text>
        <dbReference type="Rhea" id="RHEA:22380"/>
        <dbReference type="Rhea" id="RHEA-COMP:14570"/>
        <dbReference type="Rhea" id="RHEA-COMP:14573"/>
        <dbReference type="ChEBI" id="CHEBI:15377"/>
        <dbReference type="ChEBI" id="CHEBI:15378"/>
        <dbReference type="ChEBI" id="CHEBI:17790"/>
        <dbReference type="ChEBI" id="CHEBI:140522"/>
        <dbReference type="ChEBI" id="CHEBI:140523"/>
        <dbReference type="EC" id="3.1.1.11"/>
    </reaction>
</comment>
<comment type="pathway">
    <text>Glycan metabolism; pectin degradation; 2-dehydro-3-deoxy-D-gluconate from pectin: step 1/5.</text>
</comment>
<comment type="subcellular location">
    <subcellularLocation>
        <location evidence="1">Secreted</location>
    </subcellularLocation>
</comment>
<comment type="similarity">
    <text evidence="4">Belongs to the pectinesterase family.</text>
</comment>
<gene>
    <name type="primary">pmeA</name>
    <name type="ORF">AFUA_8G06880</name>
</gene>
<name>PMEA_ASPFU</name>
<accession>Q4WBT5</accession>
<evidence type="ECO:0000250" key="1"/>
<evidence type="ECO:0000255" key="2"/>
<evidence type="ECO:0000255" key="3">
    <source>
        <dbReference type="PROSITE-ProRule" id="PRU10040"/>
    </source>
</evidence>
<evidence type="ECO:0000305" key="4"/>
<reference key="1">
    <citation type="journal article" date="2005" name="Nature">
        <title>Genomic sequence of the pathogenic and allergenic filamentous fungus Aspergillus fumigatus.</title>
        <authorList>
            <person name="Nierman W.C."/>
            <person name="Pain A."/>
            <person name="Anderson M.J."/>
            <person name="Wortman J.R."/>
            <person name="Kim H.S."/>
            <person name="Arroyo J."/>
            <person name="Berriman M."/>
            <person name="Abe K."/>
            <person name="Archer D.B."/>
            <person name="Bermejo C."/>
            <person name="Bennett J.W."/>
            <person name="Bowyer P."/>
            <person name="Chen D."/>
            <person name="Collins M."/>
            <person name="Coulsen R."/>
            <person name="Davies R."/>
            <person name="Dyer P.S."/>
            <person name="Farman M.L."/>
            <person name="Fedorova N."/>
            <person name="Fedorova N.D."/>
            <person name="Feldblyum T.V."/>
            <person name="Fischer R."/>
            <person name="Fosker N."/>
            <person name="Fraser A."/>
            <person name="Garcia J.L."/>
            <person name="Garcia M.J."/>
            <person name="Goble A."/>
            <person name="Goldman G.H."/>
            <person name="Gomi K."/>
            <person name="Griffith-Jones S."/>
            <person name="Gwilliam R."/>
            <person name="Haas B.J."/>
            <person name="Haas H."/>
            <person name="Harris D.E."/>
            <person name="Horiuchi H."/>
            <person name="Huang J."/>
            <person name="Humphray S."/>
            <person name="Jimenez J."/>
            <person name="Keller N."/>
            <person name="Khouri H."/>
            <person name="Kitamoto K."/>
            <person name="Kobayashi T."/>
            <person name="Konzack S."/>
            <person name="Kulkarni R."/>
            <person name="Kumagai T."/>
            <person name="Lafton A."/>
            <person name="Latge J.-P."/>
            <person name="Li W."/>
            <person name="Lord A."/>
            <person name="Lu C."/>
            <person name="Majoros W.H."/>
            <person name="May G.S."/>
            <person name="Miller B.L."/>
            <person name="Mohamoud Y."/>
            <person name="Molina M."/>
            <person name="Monod M."/>
            <person name="Mouyna I."/>
            <person name="Mulligan S."/>
            <person name="Murphy L.D."/>
            <person name="O'Neil S."/>
            <person name="Paulsen I."/>
            <person name="Penalva M.A."/>
            <person name="Pertea M."/>
            <person name="Price C."/>
            <person name="Pritchard B.L."/>
            <person name="Quail M.A."/>
            <person name="Rabbinowitsch E."/>
            <person name="Rawlins N."/>
            <person name="Rajandream M.A."/>
            <person name="Reichard U."/>
            <person name="Renauld H."/>
            <person name="Robson G.D."/>
            <person name="Rodriguez de Cordoba S."/>
            <person name="Rodriguez-Pena J.M."/>
            <person name="Ronning C.M."/>
            <person name="Rutter S."/>
            <person name="Salzberg S.L."/>
            <person name="Sanchez M."/>
            <person name="Sanchez-Ferrero J.C."/>
            <person name="Saunders D."/>
            <person name="Seeger K."/>
            <person name="Squares R."/>
            <person name="Squares S."/>
            <person name="Takeuchi M."/>
            <person name="Tekaia F."/>
            <person name="Turner G."/>
            <person name="Vazquez de Aldana C.R."/>
            <person name="Weidman J."/>
            <person name="White O."/>
            <person name="Woodward J.R."/>
            <person name="Yu J.-H."/>
            <person name="Fraser C.M."/>
            <person name="Galagan J.E."/>
            <person name="Asai K."/>
            <person name="Machida M."/>
            <person name="Hall N."/>
            <person name="Barrell B.G."/>
            <person name="Denning D.W."/>
        </authorList>
    </citation>
    <scope>NUCLEOTIDE SEQUENCE [LARGE SCALE GENOMIC DNA]</scope>
    <source>
        <strain>ATCC MYA-4609 / CBS 101355 / FGSC A1100 / Af293</strain>
    </source>
</reference>